<gene>
    <name evidence="1" type="primary">ispE</name>
    <name type="ordered locus">BcerKBAB4_0040</name>
</gene>
<comment type="function">
    <text evidence="1">Catalyzes the phosphorylation of the position 2 hydroxy group of 4-diphosphocytidyl-2C-methyl-D-erythritol.</text>
</comment>
<comment type="catalytic activity">
    <reaction evidence="1">
        <text>4-CDP-2-C-methyl-D-erythritol + ATP = 4-CDP-2-C-methyl-D-erythritol 2-phosphate + ADP + H(+)</text>
        <dbReference type="Rhea" id="RHEA:18437"/>
        <dbReference type="ChEBI" id="CHEBI:15378"/>
        <dbReference type="ChEBI" id="CHEBI:30616"/>
        <dbReference type="ChEBI" id="CHEBI:57823"/>
        <dbReference type="ChEBI" id="CHEBI:57919"/>
        <dbReference type="ChEBI" id="CHEBI:456216"/>
        <dbReference type="EC" id="2.7.1.148"/>
    </reaction>
</comment>
<comment type="pathway">
    <text evidence="1">Isoprenoid biosynthesis; isopentenyl diphosphate biosynthesis via DXP pathway; isopentenyl diphosphate from 1-deoxy-D-xylulose 5-phosphate: step 3/6.</text>
</comment>
<comment type="similarity">
    <text evidence="1">Belongs to the GHMP kinase family. IspE subfamily.</text>
</comment>
<feature type="chain" id="PRO_1000092062" description="4-diphosphocytidyl-2-C-methyl-D-erythritol kinase">
    <location>
        <begin position="1"/>
        <end position="289"/>
    </location>
</feature>
<feature type="active site" evidence="1">
    <location>
        <position position="10"/>
    </location>
</feature>
<feature type="active site" evidence="1">
    <location>
        <position position="136"/>
    </location>
</feature>
<feature type="binding site" evidence="1">
    <location>
        <begin position="94"/>
        <end position="104"/>
    </location>
    <ligand>
        <name>ATP</name>
        <dbReference type="ChEBI" id="CHEBI:30616"/>
    </ligand>
</feature>
<accession>A9VN58</accession>
<organism>
    <name type="scientific">Bacillus mycoides (strain KBAB4)</name>
    <name type="common">Bacillus weihenstephanensis</name>
    <dbReference type="NCBI Taxonomy" id="315730"/>
    <lineage>
        <taxon>Bacteria</taxon>
        <taxon>Bacillati</taxon>
        <taxon>Bacillota</taxon>
        <taxon>Bacilli</taxon>
        <taxon>Bacillales</taxon>
        <taxon>Bacillaceae</taxon>
        <taxon>Bacillus</taxon>
        <taxon>Bacillus cereus group</taxon>
    </lineage>
</organism>
<proteinExistence type="inferred from homology"/>
<dbReference type="EC" id="2.7.1.148" evidence="1"/>
<dbReference type="EMBL" id="CP000903">
    <property type="protein sequence ID" value="ABY41309.1"/>
    <property type="molecule type" value="Genomic_DNA"/>
</dbReference>
<dbReference type="SMR" id="A9VN58"/>
<dbReference type="KEGG" id="bwe:BcerKBAB4_0040"/>
<dbReference type="eggNOG" id="COG1947">
    <property type="taxonomic scope" value="Bacteria"/>
</dbReference>
<dbReference type="HOGENOM" id="CLU_053057_1_1_9"/>
<dbReference type="UniPathway" id="UPA00056">
    <property type="reaction ID" value="UER00094"/>
</dbReference>
<dbReference type="Proteomes" id="UP000002154">
    <property type="component" value="Chromosome"/>
</dbReference>
<dbReference type="GO" id="GO:0050515">
    <property type="term" value="F:4-(cytidine 5'-diphospho)-2-C-methyl-D-erythritol kinase activity"/>
    <property type="evidence" value="ECO:0007669"/>
    <property type="project" value="UniProtKB-UniRule"/>
</dbReference>
<dbReference type="GO" id="GO:0005524">
    <property type="term" value="F:ATP binding"/>
    <property type="evidence" value="ECO:0007669"/>
    <property type="project" value="UniProtKB-UniRule"/>
</dbReference>
<dbReference type="GO" id="GO:0019288">
    <property type="term" value="P:isopentenyl diphosphate biosynthetic process, methylerythritol 4-phosphate pathway"/>
    <property type="evidence" value="ECO:0007669"/>
    <property type="project" value="UniProtKB-UniRule"/>
</dbReference>
<dbReference type="GO" id="GO:0016114">
    <property type="term" value="P:terpenoid biosynthetic process"/>
    <property type="evidence" value="ECO:0007669"/>
    <property type="project" value="InterPro"/>
</dbReference>
<dbReference type="FunFam" id="3.30.230.10:FF:000029">
    <property type="entry name" value="4-diphosphocytidyl-2-C-methyl-D-erythritol kinase"/>
    <property type="match status" value="1"/>
</dbReference>
<dbReference type="FunFam" id="3.30.70.890:FF:000006">
    <property type="entry name" value="4-diphosphocytidyl-2-C-methyl-D-erythritol kinase"/>
    <property type="match status" value="1"/>
</dbReference>
<dbReference type="Gene3D" id="3.30.230.10">
    <property type="match status" value="1"/>
</dbReference>
<dbReference type="Gene3D" id="3.30.70.890">
    <property type="entry name" value="GHMP kinase, C-terminal domain"/>
    <property type="match status" value="1"/>
</dbReference>
<dbReference type="HAMAP" id="MF_00061">
    <property type="entry name" value="IspE"/>
    <property type="match status" value="1"/>
</dbReference>
<dbReference type="InterPro" id="IPR013750">
    <property type="entry name" value="GHMP_kinase_C_dom"/>
</dbReference>
<dbReference type="InterPro" id="IPR036554">
    <property type="entry name" value="GHMP_kinase_C_sf"/>
</dbReference>
<dbReference type="InterPro" id="IPR006204">
    <property type="entry name" value="GHMP_kinase_N_dom"/>
</dbReference>
<dbReference type="InterPro" id="IPR004424">
    <property type="entry name" value="IspE"/>
</dbReference>
<dbReference type="InterPro" id="IPR020568">
    <property type="entry name" value="Ribosomal_Su5_D2-typ_SF"/>
</dbReference>
<dbReference type="InterPro" id="IPR014721">
    <property type="entry name" value="Ribsml_uS5_D2-typ_fold_subgr"/>
</dbReference>
<dbReference type="NCBIfam" id="TIGR00154">
    <property type="entry name" value="ispE"/>
    <property type="match status" value="1"/>
</dbReference>
<dbReference type="NCBIfam" id="NF011202">
    <property type="entry name" value="PRK14608.1"/>
    <property type="match status" value="1"/>
</dbReference>
<dbReference type="PANTHER" id="PTHR43527">
    <property type="entry name" value="4-DIPHOSPHOCYTIDYL-2-C-METHYL-D-ERYTHRITOL KINASE, CHLOROPLASTIC"/>
    <property type="match status" value="1"/>
</dbReference>
<dbReference type="PANTHER" id="PTHR43527:SF2">
    <property type="entry name" value="4-DIPHOSPHOCYTIDYL-2-C-METHYL-D-ERYTHRITOL KINASE, CHLOROPLASTIC"/>
    <property type="match status" value="1"/>
</dbReference>
<dbReference type="Pfam" id="PF08544">
    <property type="entry name" value="GHMP_kinases_C"/>
    <property type="match status" value="1"/>
</dbReference>
<dbReference type="Pfam" id="PF00288">
    <property type="entry name" value="GHMP_kinases_N"/>
    <property type="match status" value="1"/>
</dbReference>
<dbReference type="PIRSF" id="PIRSF010376">
    <property type="entry name" value="IspE"/>
    <property type="match status" value="1"/>
</dbReference>
<dbReference type="SUPFAM" id="SSF55060">
    <property type="entry name" value="GHMP Kinase, C-terminal domain"/>
    <property type="match status" value="1"/>
</dbReference>
<dbReference type="SUPFAM" id="SSF54211">
    <property type="entry name" value="Ribosomal protein S5 domain 2-like"/>
    <property type="match status" value="1"/>
</dbReference>
<evidence type="ECO:0000255" key="1">
    <source>
        <dbReference type="HAMAP-Rule" id="MF_00061"/>
    </source>
</evidence>
<sequence length="289" mass="31616">MKLLVKAPAKINLSLDVLGKRQDGYHEVKMIMTTIDLADRLELTELAEDRIEILSHNRYVPDDQRNLAYQAAKLLKVKFNVKKGVSITIEKTIPVAAGLAGGSSDAAATLRGLNKLWNLGLTIDELAKLGAEIGSDVSFCVYGGTAIATGRGEEIEHIKTPPSCWVVLAKPHIGVSTADVYGNLKLNRVTHPNVDKMVEVINHGDYKGICDTVGNVLEDVTFAMHPEVARIKSQMKRFGADAVLMSGSGPTVFGLVHHDSRMHRIYNGLKGFCEQVYAVRLLGERETLE</sequence>
<reference key="1">
    <citation type="journal article" date="2008" name="Chem. Biol. Interact.">
        <title>Extending the Bacillus cereus group genomics to putative food-borne pathogens of different toxicity.</title>
        <authorList>
            <person name="Lapidus A."/>
            <person name="Goltsman E."/>
            <person name="Auger S."/>
            <person name="Galleron N."/>
            <person name="Segurens B."/>
            <person name="Dossat C."/>
            <person name="Land M.L."/>
            <person name="Broussolle V."/>
            <person name="Brillard J."/>
            <person name="Guinebretiere M.-H."/>
            <person name="Sanchis V."/>
            <person name="Nguen-the C."/>
            <person name="Lereclus D."/>
            <person name="Richardson P."/>
            <person name="Wincker P."/>
            <person name="Weissenbach J."/>
            <person name="Ehrlich S.D."/>
            <person name="Sorokin A."/>
        </authorList>
    </citation>
    <scope>NUCLEOTIDE SEQUENCE [LARGE SCALE GENOMIC DNA]</scope>
    <source>
        <strain>KBAB4</strain>
    </source>
</reference>
<protein>
    <recommendedName>
        <fullName evidence="1">4-diphosphocytidyl-2-C-methyl-D-erythritol kinase</fullName>
        <shortName evidence="1">CMK</shortName>
        <ecNumber evidence="1">2.7.1.148</ecNumber>
    </recommendedName>
    <alternativeName>
        <fullName evidence="1">4-(cytidine-5'-diphospho)-2-C-methyl-D-erythritol kinase</fullName>
    </alternativeName>
</protein>
<keyword id="KW-0067">ATP-binding</keyword>
<keyword id="KW-0414">Isoprene biosynthesis</keyword>
<keyword id="KW-0418">Kinase</keyword>
<keyword id="KW-0547">Nucleotide-binding</keyword>
<keyword id="KW-0808">Transferase</keyword>
<name>ISPE_BACMK</name>